<gene>
    <name evidence="1" type="primary">chdC</name>
    <name type="ordered locus">BAMEG_5682</name>
</gene>
<feature type="chain" id="PRO_1000184936" description="Coproheme decarboxylase">
    <location>
        <begin position="1"/>
        <end position="247"/>
    </location>
</feature>
<feature type="active site" evidence="1">
    <location>
        <position position="143"/>
    </location>
</feature>
<feature type="binding site" evidence="1">
    <location>
        <position position="129"/>
    </location>
    <ligand>
        <name>Fe-coproporphyrin III</name>
        <dbReference type="ChEBI" id="CHEBI:68438"/>
    </ligand>
</feature>
<feature type="binding site" evidence="1">
    <location>
        <begin position="143"/>
        <end position="147"/>
    </location>
    <ligand>
        <name>Fe-coproporphyrin III</name>
        <dbReference type="ChEBI" id="CHEBI:68438"/>
    </ligand>
</feature>
<feature type="binding site" description="axial binding residue" evidence="1">
    <location>
        <position position="170"/>
    </location>
    <ligand>
        <name>Fe-coproporphyrin III</name>
        <dbReference type="ChEBI" id="CHEBI:68438"/>
    </ligand>
    <ligandPart>
        <name>Fe</name>
        <dbReference type="ChEBI" id="CHEBI:18248"/>
    </ligandPart>
</feature>
<feature type="binding site" evidence="1">
    <location>
        <position position="183"/>
    </location>
    <ligand>
        <name>Fe-coproporphyrin III</name>
        <dbReference type="ChEBI" id="CHEBI:68438"/>
    </ligand>
</feature>
<feature type="binding site" evidence="1">
    <location>
        <position position="221"/>
    </location>
    <ligand>
        <name>Fe-coproporphyrin III</name>
        <dbReference type="ChEBI" id="CHEBI:68438"/>
    </ligand>
</feature>
<name>CHDC_BACAC</name>
<dbReference type="EC" id="1.3.98.5" evidence="1"/>
<dbReference type="EMBL" id="CP001215">
    <property type="protein sequence ID" value="ACP14443.1"/>
    <property type="molecule type" value="Genomic_DNA"/>
</dbReference>
<dbReference type="SMR" id="C3LFR7"/>
<dbReference type="KEGG" id="bah:BAMEG_5682"/>
<dbReference type="HOGENOM" id="CLU_063226_1_0_9"/>
<dbReference type="UniPathway" id="UPA00252"/>
<dbReference type="GO" id="GO:0020037">
    <property type="term" value="F:heme binding"/>
    <property type="evidence" value="ECO:0007669"/>
    <property type="project" value="InterPro"/>
</dbReference>
<dbReference type="GO" id="GO:0046872">
    <property type="term" value="F:metal ion binding"/>
    <property type="evidence" value="ECO:0007669"/>
    <property type="project" value="UniProtKB-KW"/>
</dbReference>
<dbReference type="GO" id="GO:0016634">
    <property type="term" value="F:oxidoreductase activity, acting on the CH-CH group of donors, oxygen as acceptor"/>
    <property type="evidence" value="ECO:0007669"/>
    <property type="project" value="UniProtKB-UniRule"/>
</dbReference>
<dbReference type="GO" id="GO:0004601">
    <property type="term" value="F:peroxidase activity"/>
    <property type="evidence" value="ECO:0007669"/>
    <property type="project" value="InterPro"/>
</dbReference>
<dbReference type="GO" id="GO:0006785">
    <property type="term" value="P:heme B biosynthetic process"/>
    <property type="evidence" value="ECO:0007669"/>
    <property type="project" value="UniProtKB-UniRule"/>
</dbReference>
<dbReference type="Gene3D" id="3.30.70.1030">
    <property type="entry name" value="Apc35880, domain 1"/>
    <property type="match status" value="2"/>
</dbReference>
<dbReference type="HAMAP" id="MF_01442">
    <property type="entry name" value="Coproheme_decarbox_1"/>
    <property type="match status" value="1"/>
</dbReference>
<dbReference type="InterPro" id="IPR031332">
    <property type="entry name" value="CHDC"/>
</dbReference>
<dbReference type="InterPro" id="IPR010644">
    <property type="entry name" value="ChdC/CLD"/>
</dbReference>
<dbReference type="InterPro" id="IPR011008">
    <property type="entry name" value="Dimeric_a/b-barrel"/>
</dbReference>
<dbReference type="NCBIfam" id="NF008913">
    <property type="entry name" value="PRK12276.1"/>
    <property type="match status" value="1"/>
</dbReference>
<dbReference type="PANTHER" id="PTHR36843:SF1">
    <property type="entry name" value="COPROHEME DECARBOXYLASE"/>
    <property type="match status" value="1"/>
</dbReference>
<dbReference type="PANTHER" id="PTHR36843">
    <property type="entry name" value="HEME-DEPENDENT PEROXIDASE YWFI-RELATED"/>
    <property type="match status" value="1"/>
</dbReference>
<dbReference type="Pfam" id="PF06778">
    <property type="entry name" value="Chlor_dismutase"/>
    <property type="match status" value="1"/>
</dbReference>
<dbReference type="SUPFAM" id="SSF54909">
    <property type="entry name" value="Dimeric alpha+beta barrel"/>
    <property type="match status" value="1"/>
</dbReference>
<comment type="function">
    <text evidence="1">Involved in coproporphyrin-dependent heme b biosynthesis. Catalyzes the decarboxylation of Fe-coproporphyrin III (coproheme) to heme b (protoheme IX), the last step of the pathway. The reaction occurs in a stepwise manner with a three-propionate intermediate.</text>
</comment>
<comment type="catalytic activity">
    <reaction evidence="1">
        <text>Fe-coproporphyrin III + 2 H2O2 + 2 H(+) = heme b + 2 CO2 + 4 H2O</text>
        <dbReference type="Rhea" id="RHEA:56516"/>
        <dbReference type="ChEBI" id="CHEBI:15377"/>
        <dbReference type="ChEBI" id="CHEBI:15378"/>
        <dbReference type="ChEBI" id="CHEBI:16240"/>
        <dbReference type="ChEBI" id="CHEBI:16526"/>
        <dbReference type="ChEBI" id="CHEBI:60344"/>
        <dbReference type="ChEBI" id="CHEBI:68438"/>
        <dbReference type="EC" id="1.3.98.5"/>
    </reaction>
    <physiologicalReaction direction="left-to-right" evidence="1">
        <dbReference type="Rhea" id="RHEA:56517"/>
    </physiologicalReaction>
</comment>
<comment type="catalytic activity">
    <reaction evidence="1">
        <text>Fe-coproporphyrin III + H2O2 + H(+) = harderoheme III + CO2 + 2 H2O</text>
        <dbReference type="Rhea" id="RHEA:57940"/>
        <dbReference type="ChEBI" id="CHEBI:15377"/>
        <dbReference type="ChEBI" id="CHEBI:15378"/>
        <dbReference type="ChEBI" id="CHEBI:16240"/>
        <dbReference type="ChEBI" id="CHEBI:16526"/>
        <dbReference type="ChEBI" id="CHEBI:68438"/>
        <dbReference type="ChEBI" id="CHEBI:142463"/>
    </reaction>
    <physiologicalReaction direction="left-to-right" evidence="1">
        <dbReference type="Rhea" id="RHEA:57941"/>
    </physiologicalReaction>
</comment>
<comment type="catalytic activity">
    <reaction evidence="1">
        <text>harderoheme III + H2O2 + H(+) = heme b + CO2 + 2 H2O</text>
        <dbReference type="Rhea" id="RHEA:57944"/>
        <dbReference type="ChEBI" id="CHEBI:15377"/>
        <dbReference type="ChEBI" id="CHEBI:15378"/>
        <dbReference type="ChEBI" id="CHEBI:16240"/>
        <dbReference type="ChEBI" id="CHEBI:16526"/>
        <dbReference type="ChEBI" id="CHEBI:60344"/>
        <dbReference type="ChEBI" id="CHEBI:142463"/>
    </reaction>
    <physiologicalReaction direction="left-to-right" evidence="1">
        <dbReference type="Rhea" id="RHEA:57945"/>
    </physiologicalReaction>
</comment>
<comment type="cofactor">
    <cofactor evidence="1">
        <name>Fe-coproporphyrin III</name>
        <dbReference type="ChEBI" id="CHEBI:68438"/>
    </cofactor>
    <text evidence="1">Fe-coproporphyrin III acts both as a substrate and a redox cofactor.</text>
</comment>
<comment type="pathway">
    <text evidence="1">Porphyrin-containing compound metabolism; protoheme biosynthesis.</text>
</comment>
<comment type="similarity">
    <text evidence="1">Belongs to the ChdC family. Type 1 subfamily.</text>
</comment>
<reference key="1">
    <citation type="submission" date="2008-10" db="EMBL/GenBank/DDBJ databases">
        <title>Genome sequence of Bacillus anthracis str. CDC 684.</title>
        <authorList>
            <person name="Dodson R.J."/>
            <person name="Munk A.C."/>
            <person name="Brettin T."/>
            <person name="Bruce D."/>
            <person name="Detter C."/>
            <person name="Tapia R."/>
            <person name="Han C."/>
            <person name="Sutton G."/>
            <person name="Sims D."/>
        </authorList>
    </citation>
    <scope>NUCLEOTIDE SEQUENCE [LARGE SCALE GENOMIC DNA]</scope>
    <source>
        <strain>CDC 684 / NRRL 3495</strain>
    </source>
</reference>
<accession>C3LFR7</accession>
<proteinExistence type="inferred from homology"/>
<organism>
    <name type="scientific">Bacillus anthracis (strain CDC 684 / NRRL 3495)</name>
    <dbReference type="NCBI Taxonomy" id="568206"/>
    <lineage>
        <taxon>Bacteria</taxon>
        <taxon>Bacillati</taxon>
        <taxon>Bacillota</taxon>
        <taxon>Bacilli</taxon>
        <taxon>Bacillales</taxon>
        <taxon>Bacillaceae</taxon>
        <taxon>Bacillus</taxon>
        <taxon>Bacillus cereus group</taxon>
    </lineage>
</organism>
<protein>
    <recommendedName>
        <fullName evidence="1">Coproheme decarboxylase</fullName>
        <ecNumber evidence="1">1.3.98.5</ecNumber>
    </recommendedName>
    <alternativeName>
        <fullName evidence="1">Coproheme III oxidative decarboxylase</fullName>
    </alternativeName>
    <alternativeName>
        <fullName evidence="1">Hydrogen peroxide-dependent heme synthase</fullName>
    </alternativeName>
</protein>
<keyword id="KW-0349">Heme</keyword>
<keyword id="KW-0350">Heme biosynthesis</keyword>
<keyword id="KW-0408">Iron</keyword>
<keyword id="KW-0479">Metal-binding</keyword>
<keyword id="KW-0560">Oxidoreductase</keyword>
<sequence length="247" mass="28652">MSEATTTLDGWYCLHDLRSIDWAAWKTLSSDERGQAVSEFLNVVEKWNDVAAAKKGSHAMYTVVGQKADIMLMILRPTMEELNEIETELNKTTLAEYMVPAYSYVSVVELSNYLPADEDPYQNPQILARLYPELPKANHICFYPMDKRRQGDDNWYMLPMEERKKMMYSHSKIGRQYAGKVRQVISGSVGFDDFEWGVTLFADDVLQFKKLIYEMRFDEVSARYGEFGTFFVGNILPDEKVEKFLHI</sequence>
<evidence type="ECO:0000255" key="1">
    <source>
        <dbReference type="HAMAP-Rule" id="MF_01442"/>
    </source>
</evidence>